<name>Y1634_STRA5</name>
<keyword id="KW-1003">Cell membrane</keyword>
<keyword id="KW-0472">Membrane</keyword>
<keyword id="KW-1185">Reference proteome</keyword>
<keyword id="KW-0812">Transmembrane</keyword>
<keyword id="KW-1133">Transmembrane helix</keyword>
<evidence type="ECO:0000255" key="1">
    <source>
        <dbReference type="HAMAP-Rule" id="MF_01572"/>
    </source>
</evidence>
<evidence type="ECO:0000305" key="2"/>
<feature type="chain" id="PRO_0000260812" description="UPF0397 protein SAG1634">
    <location>
        <begin position="1"/>
        <end position="182"/>
    </location>
</feature>
<feature type="transmembrane region" description="Helical" evidence="1">
    <location>
        <begin position="9"/>
        <end position="29"/>
    </location>
</feature>
<feature type="transmembrane region" description="Helical" evidence="1">
    <location>
        <begin position="42"/>
        <end position="62"/>
    </location>
</feature>
<feature type="transmembrane region" description="Helical" evidence="1">
    <location>
        <begin position="74"/>
        <end position="94"/>
    </location>
</feature>
<feature type="transmembrane region" description="Helical" evidence="1">
    <location>
        <begin position="109"/>
        <end position="129"/>
    </location>
</feature>
<feature type="transmembrane region" description="Helical" evidence="1">
    <location>
        <begin position="148"/>
        <end position="168"/>
    </location>
</feature>
<accession>Q8DY59</accession>
<protein>
    <recommendedName>
        <fullName evidence="1">UPF0397 protein SAG1634</fullName>
    </recommendedName>
</protein>
<comment type="subcellular location">
    <subcellularLocation>
        <location evidence="1">Cell membrane</location>
        <topology evidence="1">Multi-pass membrane protein</topology>
    </subcellularLocation>
</comment>
<comment type="similarity">
    <text evidence="1">Belongs to the UPF0397 family.</text>
</comment>
<comment type="sequence caution" evidence="2">
    <conflict type="erroneous initiation">
        <sequence resource="EMBL-CDS" id="AAN00498"/>
    </conflict>
</comment>
<reference key="1">
    <citation type="journal article" date="2002" name="Proc. Natl. Acad. Sci. U.S.A.">
        <title>Complete genome sequence and comparative genomic analysis of an emerging human pathogen, serotype V Streptococcus agalactiae.</title>
        <authorList>
            <person name="Tettelin H."/>
            <person name="Masignani V."/>
            <person name="Cieslewicz M.J."/>
            <person name="Eisen J.A."/>
            <person name="Peterson S.N."/>
            <person name="Wessels M.R."/>
            <person name="Paulsen I.T."/>
            <person name="Nelson K.E."/>
            <person name="Margarit I."/>
            <person name="Read T.D."/>
            <person name="Madoff L.C."/>
            <person name="Wolf A.M."/>
            <person name="Beanan M.J."/>
            <person name="Brinkac L.M."/>
            <person name="Daugherty S.C."/>
            <person name="DeBoy R.T."/>
            <person name="Durkin A.S."/>
            <person name="Kolonay J.F."/>
            <person name="Madupu R."/>
            <person name="Lewis M.R."/>
            <person name="Radune D."/>
            <person name="Fedorova N.B."/>
            <person name="Scanlan D."/>
            <person name="Khouri H.M."/>
            <person name="Mulligan S."/>
            <person name="Carty H.A."/>
            <person name="Cline R.T."/>
            <person name="Van Aken S.E."/>
            <person name="Gill J."/>
            <person name="Scarselli M."/>
            <person name="Mora M."/>
            <person name="Iacobini E.T."/>
            <person name="Brettoni C."/>
            <person name="Galli G."/>
            <person name="Mariani M."/>
            <person name="Vegni F."/>
            <person name="Maione D."/>
            <person name="Rinaudo D."/>
            <person name="Rappuoli R."/>
            <person name="Telford J.L."/>
            <person name="Kasper D.L."/>
            <person name="Grandi G."/>
            <person name="Fraser C.M."/>
        </authorList>
    </citation>
    <scope>NUCLEOTIDE SEQUENCE [LARGE SCALE GENOMIC DNA]</scope>
    <source>
        <strain>ATCC BAA-611 / 2603 V/R</strain>
    </source>
</reference>
<organism>
    <name type="scientific">Streptococcus agalactiae serotype V (strain ATCC BAA-611 / 2603 V/R)</name>
    <dbReference type="NCBI Taxonomy" id="208435"/>
    <lineage>
        <taxon>Bacteria</taxon>
        <taxon>Bacillati</taxon>
        <taxon>Bacillota</taxon>
        <taxon>Bacilli</taxon>
        <taxon>Lactobacillales</taxon>
        <taxon>Streptococcaceae</taxon>
        <taxon>Streptococcus</taxon>
    </lineage>
</organism>
<sequence length="182" mass="19488">MNTNTIKKVVATGIGAALFIIIGMLVNIPTPIPNTNIQLQYAVLALFAVIYGPGVGFFTGFIGHALKDSIQYGSPWWTWVLVSGLLGLMIGFFAKKLAIQLSGMTKKDLLLFNVVQVIANLIGWSVVAPYGDIFFYSEPASKVFAQGFLSSLVNSITIGVGGTLLLLAYAKSRPQKGSLSKD</sequence>
<dbReference type="EMBL" id="AE009948">
    <property type="protein sequence ID" value="AAN00498.1"/>
    <property type="status" value="ALT_INIT"/>
    <property type="molecule type" value="Genomic_DNA"/>
</dbReference>
<dbReference type="RefSeq" id="NP_688625.2">
    <property type="nucleotide sequence ID" value="NC_004116.1"/>
</dbReference>
<dbReference type="RefSeq" id="WP_001095696.1">
    <property type="nucleotide sequence ID" value="NC_004116.1"/>
</dbReference>
<dbReference type="SMR" id="Q8DY59"/>
<dbReference type="STRING" id="208435.SAG1634"/>
<dbReference type="KEGG" id="sag:SAG1634"/>
<dbReference type="PATRIC" id="fig|208435.3.peg.1645"/>
<dbReference type="HOGENOM" id="CLU_120023_0_0_9"/>
<dbReference type="OrthoDB" id="4550662at2"/>
<dbReference type="Proteomes" id="UP000000821">
    <property type="component" value="Chromosome"/>
</dbReference>
<dbReference type="GO" id="GO:0005886">
    <property type="term" value="C:plasma membrane"/>
    <property type="evidence" value="ECO:0007669"/>
    <property type="project" value="UniProtKB-SubCell"/>
</dbReference>
<dbReference type="Gene3D" id="1.10.1760.20">
    <property type="match status" value="1"/>
</dbReference>
<dbReference type="HAMAP" id="MF_01572">
    <property type="entry name" value="UPF0397"/>
    <property type="match status" value="1"/>
</dbReference>
<dbReference type="InterPro" id="IPR009825">
    <property type="entry name" value="ECF_substrate-spec-like"/>
</dbReference>
<dbReference type="InterPro" id="IPR022914">
    <property type="entry name" value="UPF0397"/>
</dbReference>
<dbReference type="NCBIfam" id="NF010182">
    <property type="entry name" value="PRK13661.1"/>
    <property type="match status" value="1"/>
</dbReference>
<dbReference type="PANTHER" id="PTHR37815">
    <property type="entry name" value="UPF0397 PROTEIN BC_2624-RELATED"/>
    <property type="match status" value="1"/>
</dbReference>
<dbReference type="PANTHER" id="PTHR37815:SF3">
    <property type="entry name" value="UPF0397 PROTEIN SPR0429"/>
    <property type="match status" value="1"/>
</dbReference>
<dbReference type="Pfam" id="PF07155">
    <property type="entry name" value="ECF-ribofla_trS"/>
    <property type="match status" value="1"/>
</dbReference>
<gene>
    <name type="ordered locus">SAG1634</name>
</gene>
<proteinExistence type="inferred from homology"/>